<dbReference type="RefSeq" id="NP_001387757.1">
    <property type="nucleotide sequence ID" value="NM_001400828.1"/>
</dbReference>
<dbReference type="RefSeq" id="XP_006222929.1">
    <property type="nucleotide sequence ID" value="XM_006222867.3"/>
</dbReference>
<dbReference type="RefSeq" id="XP_006227779.1">
    <property type="nucleotide sequence ID" value="XM_006227717.3"/>
</dbReference>
<dbReference type="SMR" id="D4A9K4"/>
<dbReference type="FunCoup" id="D4A9K4">
    <property type="interactions" value="326"/>
</dbReference>
<dbReference type="STRING" id="10116.ENSRNOP00000021944"/>
<dbReference type="PhosphoSitePlus" id="D4A9K4"/>
<dbReference type="PaxDb" id="10116-ENSRNOP00000021944"/>
<dbReference type="Ensembl" id="ENSRNOT00000021944.8">
    <property type="protein sequence ID" value="ENSRNOP00000021944.7"/>
    <property type="gene ID" value="ENSRNOG00000016371.8"/>
</dbReference>
<dbReference type="GeneID" id="309570"/>
<dbReference type="AGR" id="RGD:1306962"/>
<dbReference type="RGD" id="1306962">
    <property type="gene designation" value="Slc18b1"/>
</dbReference>
<dbReference type="eggNOG" id="KOG3764">
    <property type="taxonomic scope" value="Eukaryota"/>
</dbReference>
<dbReference type="GeneTree" id="ENSGT00940000156674"/>
<dbReference type="HOGENOM" id="CLU_028639_3_0_1"/>
<dbReference type="InParanoid" id="D4A9K4"/>
<dbReference type="OMA" id="RLNFEWA"/>
<dbReference type="TreeFam" id="TF313494"/>
<dbReference type="PRO" id="PR:D4A9K4"/>
<dbReference type="Proteomes" id="UP000002494">
    <property type="component" value="Chromosome 1"/>
</dbReference>
<dbReference type="Bgee" id="ENSRNOG00000016371">
    <property type="expression patterns" value="Expressed in duodenum and 19 other cell types or tissues"/>
</dbReference>
<dbReference type="GO" id="GO:0030667">
    <property type="term" value="C:secretory granule membrane"/>
    <property type="evidence" value="ECO:0000250"/>
    <property type="project" value="UniProtKB"/>
</dbReference>
<dbReference type="GO" id="GO:0030672">
    <property type="term" value="C:synaptic vesicle membrane"/>
    <property type="evidence" value="ECO:0000314"/>
    <property type="project" value="UniProtKB"/>
</dbReference>
<dbReference type="GO" id="GO:0015311">
    <property type="term" value="F:monoamine:proton antiporter activity"/>
    <property type="evidence" value="ECO:0000250"/>
    <property type="project" value="UniProtKB"/>
</dbReference>
<dbReference type="GO" id="GO:0015312">
    <property type="term" value="F:polyamine:proton antiporter activity"/>
    <property type="evidence" value="ECO:0000250"/>
    <property type="project" value="UniProtKB"/>
</dbReference>
<dbReference type="GO" id="GO:0022857">
    <property type="term" value="F:transmembrane transporter activity"/>
    <property type="evidence" value="ECO:0000318"/>
    <property type="project" value="GO_Central"/>
</dbReference>
<dbReference type="GO" id="GO:0051610">
    <property type="term" value="P:serotonin uptake"/>
    <property type="evidence" value="ECO:0000250"/>
    <property type="project" value="UniProtKB"/>
</dbReference>
<dbReference type="GO" id="GO:0015848">
    <property type="term" value="P:spermidine transport"/>
    <property type="evidence" value="ECO:0000250"/>
    <property type="project" value="UniProtKB"/>
</dbReference>
<dbReference type="GO" id="GO:0000296">
    <property type="term" value="P:spermine transport"/>
    <property type="evidence" value="ECO:0000250"/>
    <property type="project" value="UniProtKB"/>
</dbReference>
<dbReference type="CDD" id="cd17385">
    <property type="entry name" value="MFS_SLC18B1"/>
    <property type="match status" value="1"/>
</dbReference>
<dbReference type="Gene3D" id="1.20.1250.20">
    <property type="entry name" value="MFS general substrate transporter like domains"/>
    <property type="match status" value="2"/>
</dbReference>
<dbReference type="InterPro" id="IPR011701">
    <property type="entry name" value="MFS"/>
</dbReference>
<dbReference type="InterPro" id="IPR020846">
    <property type="entry name" value="MFS_dom"/>
</dbReference>
<dbReference type="InterPro" id="IPR036259">
    <property type="entry name" value="MFS_trans_sf"/>
</dbReference>
<dbReference type="InterPro" id="IPR050930">
    <property type="entry name" value="MFS_Vesicular_Transporter"/>
</dbReference>
<dbReference type="PANTHER" id="PTHR23506">
    <property type="entry name" value="GH10249P"/>
    <property type="match status" value="1"/>
</dbReference>
<dbReference type="PANTHER" id="PTHR23506:SF26">
    <property type="entry name" value="MFS-TYPE TRANSPORTER SLC18B1"/>
    <property type="match status" value="1"/>
</dbReference>
<dbReference type="Pfam" id="PF07690">
    <property type="entry name" value="MFS_1"/>
    <property type="match status" value="2"/>
</dbReference>
<dbReference type="SUPFAM" id="SSF103473">
    <property type="entry name" value="MFS general substrate transporter"/>
    <property type="match status" value="1"/>
</dbReference>
<dbReference type="PROSITE" id="PS50850">
    <property type="entry name" value="MFS"/>
    <property type="match status" value="1"/>
</dbReference>
<gene>
    <name evidence="7 9" type="primary">Slc18b1</name>
</gene>
<keyword id="KW-0007">Acetylation</keyword>
<keyword id="KW-0968">Cytoplasmic vesicle</keyword>
<keyword id="KW-0472">Membrane</keyword>
<keyword id="KW-0597">Phosphoprotein</keyword>
<keyword id="KW-1185">Reference proteome</keyword>
<keyword id="KW-0770">Synapse</keyword>
<keyword id="KW-0812">Transmembrane</keyword>
<keyword id="KW-1133">Transmembrane helix</keyword>
<keyword id="KW-0813">Transport</keyword>
<accession>D4A9K4</accession>
<comment type="function">
    <text evidence="1 2 5">Proton-coupled polyamine antiporter involved in the translocation of polyamines from cytosol into secretory vesicles prior to their release via exocytosis. Uses the electrochemical proton gradient generated by a V-type proton-pumping ATPase to couple the efflux of protons with the uptake of a polyamine molecule (By similarity) (PubMed:25355561). Facilitates vesicular storage of spermine and spermidine in astrocytes with an impact on glutamatergic neuronal transmission and memory formation (By similarity) (PubMed:25355561). Upon antigen stimulation, regulates polyamine accumulation and release in mast cell secretory granules, which in turn potentiates mast cell degranulation and histamine secretion (By similarity).</text>
</comment>
<comment type="catalytic activity">
    <reaction evidence="2">
        <text>spermine(in) + n H(+)(out) = spermine(out) + n H(+)(in)</text>
        <dbReference type="Rhea" id="RHEA:74263"/>
        <dbReference type="ChEBI" id="CHEBI:15378"/>
        <dbReference type="ChEBI" id="CHEBI:45725"/>
    </reaction>
    <physiologicalReaction direction="left-to-right" evidence="2">
        <dbReference type="Rhea" id="RHEA:74264"/>
    </physiologicalReaction>
</comment>
<comment type="catalytic activity">
    <reaction evidence="2">
        <text>spermidine(in) + n H(+)(out) = spermidine(out) + n H(+)(in)</text>
        <dbReference type="Rhea" id="RHEA:74267"/>
        <dbReference type="ChEBI" id="CHEBI:15378"/>
        <dbReference type="ChEBI" id="CHEBI:57834"/>
    </reaction>
    <physiologicalReaction direction="left-to-right" evidence="2">
        <dbReference type="Rhea" id="RHEA:74268"/>
    </physiologicalReaction>
</comment>
<comment type="catalytic activity">
    <reaction evidence="2">
        <text>serotonin(in) + n H(+)(out) = serotonin(out) + n H(+)(in)</text>
        <dbReference type="Rhea" id="RHEA:74295"/>
        <dbReference type="ChEBI" id="CHEBI:15378"/>
        <dbReference type="ChEBI" id="CHEBI:350546"/>
    </reaction>
    <physiologicalReaction direction="left-to-right" evidence="2">
        <dbReference type="Rhea" id="RHEA:74296"/>
    </physiologicalReaction>
</comment>
<comment type="subcellular location">
    <subcellularLocation>
        <location evidence="5">Cytoplasmic vesicle</location>
        <location evidence="5">Secretory vesicle membrane</location>
        <topology evidence="3">Multi-pass membrane protein</topology>
    </subcellularLocation>
    <subcellularLocation>
        <location evidence="5">Cytoplasmic vesicle</location>
        <location evidence="5">Secretory vesicle</location>
        <location evidence="5">Synaptic vesicle membrane</location>
        <topology evidence="3">Multi-pass membrane protein</topology>
    </subcellularLocation>
    <text evidence="1 5">Colocalizes with VAMP3 and VAMP8 in mast cell secretory granules, which are distinct from histamine- and serotonin-containing granules (By similarity). Partly colocalizes with SYP in synaptic vesicles in hippocampal neurons. Localizes in VAMP2-containing secretory vesicles in astrocytes (PubMed:25355561).</text>
</comment>
<comment type="tissue specificity">
    <text evidence="5 6">Expressed in brain structures, particularly in hippocampus, cortex, and cerebellum (at protein level). Expressed in astrocytes and hippocampal neurons (at protein level) (PubMed:25355561). Expressed in peritoneal mast cells (PubMed:28082679).</text>
</comment>
<evidence type="ECO:0000250" key="1">
    <source>
        <dbReference type="UniProtKB" id="D3Z5L6"/>
    </source>
</evidence>
<evidence type="ECO:0000250" key="2">
    <source>
        <dbReference type="UniProtKB" id="Q6NT16"/>
    </source>
</evidence>
<evidence type="ECO:0000255" key="3"/>
<evidence type="ECO:0000256" key="4">
    <source>
        <dbReference type="SAM" id="MobiDB-lite"/>
    </source>
</evidence>
<evidence type="ECO:0000269" key="5">
    <source>
    </source>
</evidence>
<evidence type="ECO:0000269" key="6">
    <source>
    </source>
</evidence>
<evidence type="ECO:0000303" key="7">
    <source>
    </source>
</evidence>
<evidence type="ECO:0000305" key="8"/>
<evidence type="ECO:0000312" key="9">
    <source>
        <dbReference type="RGD" id="1306962"/>
    </source>
</evidence>
<organism>
    <name type="scientific">Rattus norvegicus</name>
    <name type="common">Rat</name>
    <dbReference type="NCBI Taxonomy" id="10116"/>
    <lineage>
        <taxon>Eukaryota</taxon>
        <taxon>Metazoa</taxon>
        <taxon>Chordata</taxon>
        <taxon>Craniata</taxon>
        <taxon>Vertebrata</taxon>
        <taxon>Euteleostomi</taxon>
        <taxon>Mammalia</taxon>
        <taxon>Eutheria</taxon>
        <taxon>Euarchontoglires</taxon>
        <taxon>Glires</taxon>
        <taxon>Rodentia</taxon>
        <taxon>Myomorpha</taxon>
        <taxon>Muroidea</taxon>
        <taxon>Muridae</taxon>
        <taxon>Murinae</taxon>
        <taxon>Rattus</taxon>
    </lineage>
</organism>
<protein>
    <recommendedName>
        <fullName>MFS-type transporter SLC18B1</fullName>
    </recommendedName>
    <alternativeName>
        <fullName>Solute carrier family 18 member B1</fullName>
    </alternativeName>
    <alternativeName>
        <fullName evidence="7">Vesicular polyamine transporter</fullName>
        <shortName evidence="7">VPAT</shortName>
    </alternativeName>
</protein>
<sequence length="455" mass="48385">MDTAGPPAPAGTEGDGPGGSTGETSRRLSKEQIFVLVSAASMNLGCMMTYSILGPFFPKEAEKKGASNTTIGMIFGCYALFELLASLVFGKYLVHIGAKFMFIAGMFVSGGVTILFGVLDQLPEGPIFIAMCFLVRIVDAIGFGAAITASSSILAKAFPNNVATVMGSLEVFSGLGLVAGPPLGGLLYQSFGYEVPFIFLGCIVLLMIPLNLCILPSYESDAGKQSFWKLVTLPKIGLIAFVIISLSSCFGFLDPTLSLFVMKKFSLSTGYVGLVFLGLSLSYAISSPLFGLLSDKMPNLRKWFLVFGNLITAGCYMLLGPIPLLHIKSQLWLLVLVLVINGVSAGMSIIPTFPEMLSCAYANGFEDGISTLGLVSGLFGAMWSVGAFMGPILGGFLCEKIGFEWAAAIQGLWTLLSGVAMALFYLWEDSTMRRSKAQNILGTEEEQAALLPNDT</sequence>
<proteinExistence type="evidence at protein level"/>
<feature type="chain" id="PRO_0000457110" description="MFS-type transporter SLC18B1">
    <location>
        <begin position="1"/>
        <end position="455"/>
    </location>
</feature>
<feature type="topological domain" description="Cytoplasmic" evidence="8">
    <location>
        <begin position="1"/>
        <end position="32"/>
    </location>
</feature>
<feature type="transmembrane region" description="Helical" evidence="3">
    <location>
        <begin position="33"/>
        <end position="53"/>
    </location>
</feature>
<feature type="topological domain" description="Extracellular" evidence="8">
    <location>
        <begin position="54"/>
        <end position="69"/>
    </location>
</feature>
<feature type="transmembrane region" description="Helical" evidence="3">
    <location>
        <begin position="70"/>
        <end position="90"/>
    </location>
</feature>
<feature type="topological domain" description="Cytoplasmic" evidence="8">
    <location>
        <begin position="91"/>
        <end position="99"/>
    </location>
</feature>
<feature type="transmembrane region" description="Helical" evidence="3">
    <location>
        <begin position="100"/>
        <end position="120"/>
    </location>
</feature>
<feature type="topological domain" description="Extracellular" evidence="8">
    <location>
        <begin position="121"/>
        <end position="126"/>
    </location>
</feature>
<feature type="transmembrane region" description="Helical" evidence="3">
    <location>
        <begin position="127"/>
        <end position="147"/>
    </location>
</feature>
<feature type="topological domain" description="Cytoplasmic" evidence="8">
    <location>
        <begin position="148"/>
        <end position="166"/>
    </location>
</feature>
<feature type="transmembrane region" description="Helical" evidence="3">
    <location>
        <begin position="167"/>
        <end position="187"/>
    </location>
</feature>
<feature type="topological domain" description="Extracellular" evidence="8">
    <location>
        <begin position="188"/>
        <end position="194"/>
    </location>
</feature>
<feature type="transmembrane region" description="Helical" evidence="3">
    <location>
        <begin position="195"/>
        <end position="215"/>
    </location>
</feature>
<feature type="topological domain" description="Cytoplasmic" evidence="8">
    <location>
        <begin position="216"/>
        <end position="232"/>
    </location>
</feature>
<feature type="transmembrane region" description="Helical" evidence="3">
    <location>
        <begin position="233"/>
        <end position="253"/>
    </location>
</feature>
<feature type="topological domain" description="Extracellular" evidence="8">
    <location>
        <begin position="254"/>
        <end position="271"/>
    </location>
</feature>
<feature type="transmembrane region" description="Helical" evidence="3">
    <location>
        <begin position="272"/>
        <end position="292"/>
    </location>
</feature>
<feature type="topological domain" description="Cytoplasmic" evidence="8">
    <location>
        <begin position="293"/>
        <end position="303"/>
    </location>
</feature>
<feature type="transmembrane region" description="Helical" evidence="3">
    <location>
        <begin position="304"/>
        <end position="324"/>
    </location>
</feature>
<feature type="topological domain" description="Extracellular" evidence="8">
    <location>
        <begin position="325"/>
        <end position="330"/>
    </location>
</feature>
<feature type="transmembrane region" description="Helical" evidence="3">
    <location>
        <begin position="331"/>
        <end position="351"/>
    </location>
</feature>
<feature type="topological domain" description="Cytoplasmic" evidence="8">
    <location>
        <begin position="352"/>
        <end position="376"/>
    </location>
</feature>
<feature type="transmembrane region" description="Helical" evidence="3">
    <location>
        <begin position="377"/>
        <end position="397"/>
    </location>
</feature>
<feature type="topological domain" description="Extracellular" evidence="8">
    <location>
        <begin position="398"/>
        <end position="406"/>
    </location>
</feature>
<feature type="transmembrane region" description="Helical" evidence="3">
    <location>
        <begin position="407"/>
        <end position="427"/>
    </location>
</feature>
<feature type="topological domain" description="Cytoplasmic" evidence="8">
    <location>
        <begin position="428"/>
        <end position="455"/>
    </location>
</feature>
<feature type="region of interest" description="Disordered" evidence="4">
    <location>
        <begin position="1"/>
        <end position="26"/>
    </location>
</feature>
<feature type="modified residue" description="N-acetylmethionine" evidence="2">
    <location>
        <position position="1"/>
    </location>
</feature>
<feature type="modified residue" description="Phosphoserine" evidence="2">
    <location>
        <position position="20"/>
    </location>
</feature>
<name>S18B1_RAT</name>
<reference key="1">
    <citation type="journal article" date="2004" name="Nature">
        <title>Genome sequence of the Brown Norway rat yields insights into mammalian evolution.</title>
        <authorList>
            <person name="Gibbs R.A."/>
            <person name="Weinstock G.M."/>
            <person name="Metzker M.L."/>
            <person name="Muzny D.M."/>
            <person name="Sodergren E.J."/>
            <person name="Scherer S."/>
            <person name="Scott G."/>
            <person name="Steffen D."/>
            <person name="Worley K.C."/>
            <person name="Burch P.E."/>
            <person name="Okwuonu G."/>
            <person name="Hines S."/>
            <person name="Lewis L."/>
            <person name="Deramo C."/>
            <person name="Delgado O."/>
            <person name="Dugan-Rocha S."/>
            <person name="Miner G."/>
            <person name="Morgan M."/>
            <person name="Hawes A."/>
            <person name="Gill R."/>
            <person name="Holt R.A."/>
            <person name="Adams M.D."/>
            <person name="Amanatides P.G."/>
            <person name="Baden-Tillson H."/>
            <person name="Barnstead M."/>
            <person name="Chin S."/>
            <person name="Evans C.A."/>
            <person name="Ferriera S."/>
            <person name="Fosler C."/>
            <person name="Glodek A."/>
            <person name="Gu Z."/>
            <person name="Jennings D."/>
            <person name="Kraft C.L."/>
            <person name="Nguyen T."/>
            <person name="Pfannkoch C.M."/>
            <person name="Sitter C."/>
            <person name="Sutton G.G."/>
            <person name="Venter J.C."/>
            <person name="Woodage T."/>
            <person name="Smith D."/>
            <person name="Lee H.-M."/>
            <person name="Gustafson E."/>
            <person name="Cahill P."/>
            <person name="Kana A."/>
            <person name="Doucette-Stamm L."/>
            <person name="Weinstock K."/>
            <person name="Fechtel K."/>
            <person name="Weiss R.B."/>
            <person name="Dunn D.M."/>
            <person name="Green E.D."/>
            <person name="Blakesley R.W."/>
            <person name="Bouffard G.G."/>
            <person name="De Jong P.J."/>
            <person name="Osoegawa K."/>
            <person name="Zhu B."/>
            <person name="Marra M."/>
            <person name="Schein J."/>
            <person name="Bosdet I."/>
            <person name="Fjell C."/>
            <person name="Jones S."/>
            <person name="Krzywinski M."/>
            <person name="Mathewson C."/>
            <person name="Siddiqui A."/>
            <person name="Wye N."/>
            <person name="McPherson J."/>
            <person name="Zhao S."/>
            <person name="Fraser C.M."/>
            <person name="Shetty J."/>
            <person name="Shatsman S."/>
            <person name="Geer K."/>
            <person name="Chen Y."/>
            <person name="Abramzon S."/>
            <person name="Nierman W.C."/>
            <person name="Havlak P.H."/>
            <person name="Chen R."/>
            <person name="Durbin K.J."/>
            <person name="Egan A."/>
            <person name="Ren Y."/>
            <person name="Song X.-Z."/>
            <person name="Li B."/>
            <person name="Liu Y."/>
            <person name="Qin X."/>
            <person name="Cawley S."/>
            <person name="Cooney A.J."/>
            <person name="D'Souza L.M."/>
            <person name="Martin K."/>
            <person name="Wu J.Q."/>
            <person name="Gonzalez-Garay M.L."/>
            <person name="Jackson A.R."/>
            <person name="Kalafus K.J."/>
            <person name="McLeod M.P."/>
            <person name="Milosavljevic A."/>
            <person name="Virk D."/>
            <person name="Volkov A."/>
            <person name="Wheeler D.A."/>
            <person name="Zhang Z."/>
            <person name="Bailey J.A."/>
            <person name="Eichler E.E."/>
            <person name="Tuzun E."/>
            <person name="Birney E."/>
            <person name="Mongin E."/>
            <person name="Ureta-Vidal A."/>
            <person name="Woodwark C."/>
            <person name="Zdobnov E."/>
            <person name="Bork P."/>
            <person name="Suyama M."/>
            <person name="Torrents D."/>
            <person name="Alexandersson M."/>
            <person name="Trask B.J."/>
            <person name="Young J.M."/>
            <person name="Huang H."/>
            <person name="Wang H."/>
            <person name="Xing H."/>
            <person name="Daniels S."/>
            <person name="Gietzen D."/>
            <person name="Schmidt J."/>
            <person name="Stevens K."/>
            <person name="Vitt U."/>
            <person name="Wingrove J."/>
            <person name="Camara F."/>
            <person name="Mar Alba M."/>
            <person name="Abril J.F."/>
            <person name="Guigo R."/>
            <person name="Smit A."/>
            <person name="Dubchak I."/>
            <person name="Rubin E.M."/>
            <person name="Couronne O."/>
            <person name="Poliakov A."/>
            <person name="Huebner N."/>
            <person name="Ganten D."/>
            <person name="Goesele C."/>
            <person name="Hummel O."/>
            <person name="Kreitler T."/>
            <person name="Lee Y.-A."/>
            <person name="Monti J."/>
            <person name="Schulz H."/>
            <person name="Zimdahl H."/>
            <person name="Himmelbauer H."/>
            <person name="Lehrach H."/>
            <person name="Jacob H.J."/>
            <person name="Bromberg S."/>
            <person name="Gullings-Handley J."/>
            <person name="Jensen-Seaman M.I."/>
            <person name="Kwitek A.E."/>
            <person name="Lazar J."/>
            <person name="Pasko D."/>
            <person name="Tonellato P.J."/>
            <person name="Twigger S."/>
            <person name="Ponting C.P."/>
            <person name="Duarte J.M."/>
            <person name="Rice S."/>
            <person name="Goodstadt L."/>
            <person name="Beatson S.A."/>
            <person name="Emes R.D."/>
            <person name="Winter E.E."/>
            <person name="Webber C."/>
            <person name="Brandt P."/>
            <person name="Nyakatura G."/>
            <person name="Adetobi M."/>
            <person name="Chiaromonte F."/>
            <person name="Elnitski L."/>
            <person name="Eswara P."/>
            <person name="Hardison R.C."/>
            <person name="Hou M."/>
            <person name="Kolbe D."/>
            <person name="Makova K."/>
            <person name="Miller W."/>
            <person name="Nekrutenko A."/>
            <person name="Riemer C."/>
            <person name="Schwartz S."/>
            <person name="Taylor J."/>
            <person name="Yang S."/>
            <person name="Zhang Y."/>
            <person name="Lindpaintner K."/>
            <person name="Andrews T.D."/>
            <person name="Caccamo M."/>
            <person name="Clamp M."/>
            <person name="Clarke L."/>
            <person name="Curwen V."/>
            <person name="Durbin R.M."/>
            <person name="Eyras E."/>
            <person name="Searle S.M."/>
            <person name="Cooper G.M."/>
            <person name="Batzoglou S."/>
            <person name="Brudno M."/>
            <person name="Sidow A."/>
            <person name="Stone E.A."/>
            <person name="Payseur B.A."/>
            <person name="Bourque G."/>
            <person name="Lopez-Otin C."/>
            <person name="Puente X.S."/>
            <person name="Chakrabarti K."/>
            <person name="Chatterji S."/>
            <person name="Dewey C."/>
            <person name="Pachter L."/>
            <person name="Bray N."/>
            <person name="Yap V.B."/>
            <person name="Caspi A."/>
            <person name="Tesler G."/>
            <person name="Pevzner P.A."/>
            <person name="Haussler D."/>
            <person name="Roskin K.M."/>
            <person name="Baertsch R."/>
            <person name="Clawson H."/>
            <person name="Furey T.S."/>
            <person name="Hinrichs A.S."/>
            <person name="Karolchik D."/>
            <person name="Kent W.J."/>
            <person name="Rosenbloom K.R."/>
            <person name="Trumbower H."/>
            <person name="Weirauch M."/>
            <person name="Cooper D.N."/>
            <person name="Stenson P.D."/>
            <person name="Ma B."/>
            <person name="Brent M."/>
            <person name="Arumugam M."/>
            <person name="Shteynberg D."/>
            <person name="Copley R.R."/>
            <person name="Taylor M.S."/>
            <person name="Riethman H."/>
            <person name="Mudunuri U."/>
            <person name="Peterson J."/>
            <person name="Guyer M."/>
            <person name="Felsenfeld A."/>
            <person name="Old S."/>
            <person name="Mockrin S."/>
            <person name="Collins F.S."/>
        </authorList>
    </citation>
    <scope>NUCLEOTIDE SEQUENCE [LARGE SCALE GENOMIC DNA]</scope>
    <source>
        <strain>Brown Norway</strain>
    </source>
</reference>
<reference key="2">
    <citation type="journal article" date="2014" name="Sci. Rep.">
        <title>Identification of a mammalian vesicular polyamine transporter.</title>
        <authorList>
            <person name="Hiasa M."/>
            <person name="Miyaji T."/>
            <person name="Haruna Y."/>
            <person name="Takeuchi T."/>
            <person name="Harada Y."/>
            <person name="Moriyama S."/>
            <person name="Yamamoto A."/>
            <person name="Omote H."/>
            <person name="Moriyama Y."/>
        </authorList>
    </citation>
    <scope>FUNCTION</scope>
    <scope>TISSUE SPECIFICITY</scope>
    <scope>SUBCELLULAR LOCATION</scope>
</reference>
<reference key="3">
    <citation type="journal article" date="2017" name="J. Biol. Chem.">
        <title>Vesicular Polyamine Transporter Mediates Vesicular Storage and Release of Polyamine from Mast Cells.</title>
        <authorList>
            <person name="Takeuchi T."/>
            <person name="Harada Y."/>
            <person name="Moriyama S."/>
            <person name="Furuta K."/>
            <person name="Tanaka S."/>
            <person name="Miyaji T."/>
            <person name="Omote H."/>
            <person name="Moriyama Y."/>
            <person name="Hiasa M."/>
        </authorList>
    </citation>
    <scope>TISSUE SPECIFICITY</scope>
</reference>